<reference key="1">
    <citation type="journal article" date="1996" name="Science">
        <title>Complete genome sequence of the methanogenic archaeon, Methanococcus jannaschii.</title>
        <authorList>
            <person name="Bult C.J."/>
            <person name="White O."/>
            <person name="Olsen G.J."/>
            <person name="Zhou L."/>
            <person name="Fleischmann R.D."/>
            <person name="Sutton G.G."/>
            <person name="Blake J.A."/>
            <person name="FitzGerald L.M."/>
            <person name="Clayton R.A."/>
            <person name="Gocayne J.D."/>
            <person name="Kerlavage A.R."/>
            <person name="Dougherty B.A."/>
            <person name="Tomb J.-F."/>
            <person name="Adams M.D."/>
            <person name="Reich C.I."/>
            <person name="Overbeek R."/>
            <person name="Kirkness E.F."/>
            <person name="Weinstock K.G."/>
            <person name="Merrick J.M."/>
            <person name="Glodek A."/>
            <person name="Scott J.L."/>
            <person name="Geoghagen N.S.M."/>
            <person name="Weidman J.F."/>
            <person name="Fuhrmann J.L."/>
            <person name="Nguyen D."/>
            <person name="Utterback T.R."/>
            <person name="Kelley J.M."/>
            <person name="Peterson J.D."/>
            <person name="Sadow P.W."/>
            <person name="Hanna M.C."/>
            <person name="Cotton M.D."/>
            <person name="Roberts K.M."/>
            <person name="Hurst M.A."/>
            <person name="Kaine B.P."/>
            <person name="Borodovsky M."/>
            <person name="Klenk H.-P."/>
            <person name="Fraser C.M."/>
            <person name="Smith H.O."/>
            <person name="Woese C.R."/>
            <person name="Venter J.C."/>
        </authorList>
    </citation>
    <scope>NUCLEOTIDE SEQUENCE [LARGE SCALE GENOMIC DNA]</scope>
    <source>
        <strain>ATCC 43067 / DSM 2661 / JAL-1 / JCM 10045 / NBRC 100440</strain>
    </source>
</reference>
<gene>
    <name type="primary">hisG</name>
    <name type="ordered locus">MJ1204</name>
</gene>
<name>HIS1_METJA</name>
<protein>
    <recommendedName>
        <fullName>ATP phosphoribosyltransferase</fullName>
        <shortName>ATP-PRT</shortName>
        <shortName>ATP-PRTase</shortName>
        <ecNumber>2.4.2.17</ecNumber>
    </recommendedName>
</protein>
<keyword id="KW-0028">Amino-acid biosynthesis</keyword>
<keyword id="KW-0067">ATP-binding</keyword>
<keyword id="KW-0963">Cytoplasm</keyword>
<keyword id="KW-0328">Glycosyltransferase</keyword>
<keyword id="KW-0368">Histidine biosynthesis</keyword>
<keyword id="KW-0460">Magnesium</keyword>
<keyword id="KW-0479">Metal-binding</keyword>
<keyword id="KW-0547">Nucleotide-binding</keyword>
<keyword id="KW-1185">Reference proteome</keyword>
<keyword id="KW-0808">Transferase</keyword>
<proteinExistence type="inferred from homology"/>
<evidence type="ECO:0000250" key="1"/>
<evidence type="ECO:0000305" key="2"/>
<sequence length="288" mass="31860">MIMFALPNKGRISEPVMKVLEKAGLKITVKGRSLFANTVDDNIKVMFARARDIPEFVADGVADIGVTGYDLVLERNVEDKVDFLLDFGFGFAKLVLAAPESSNINSIDDIKEGMRVATEFPNLTKKYFEKLNKKVEIIELSGATEIAPFIGIADLISDLTSTGTTLRLNRLKVIDEIVSSTTRLIANKNSLKDKEKREKINQIVIAIKSVLFAETKRLIMMNAPKDKVEEIRKLIPGMAGPTVSKVLSDDNMVAIHAVVNEDEIFTLVPKLHALGARDILVVPIERIL</sequence>
<comment type="function">
    <text evidence="1">Catalyzes the condensation of ATP and 5-phosphoribose 1-diphosphate to form N'-(5'-phosphoribosyl)-ATP (PR-ATP). Has a crucial role in the pathway because the rate of histidine biosynthesis seems to be controlled primarily by regulation of HisG enzymatic activity (By similarity).</text>
</comment>
<comment type="catalytic activity">
    <reaction>
        <text>1-(5-phospho-beta-D-ribosyl)-ATP + diphosphate = 5-phospho-alpha-D-ribose 1-diphosphate + ATP</text>
        <dbReference type="Rhea" id="RHEA:18473"/>
        <dbReference type="ChEBI" id="CHEBI:30616"/>
        <dbReference type="ChEBI" id="CHEBI:33019"/>
        <dbReference type="ChEBI" id="CHEBI:58017"/>
        <dbReference type="ChEBI" id="CHEBI:73183"/>
        <dbReference type="EC" id="2.4.2.17"/>
    </reaction>
</comment>
<comment type="cofactor">
    <cofactor evidence="1">
        <name>Mg(2+)</name>
        <dbReference type="ChEBI" id="CHEBI:18420"/>
    </cofactor>
</comment>
<comment type="activity regulation">
    <text evidence="1">Feedback inhibited by histidine.</text>
</comment>
<comment type="pathway">
    <text>Amino-acid biosynthesis; L-histidine biosynthesis; L-histidine from 5-phospho-alpha-D-ribose 1-diphosphate: step 1/9.</text>
</comment>
<comment type="subcellular location">
    <subcellularLocation>
        <location evidence="1">Cytoplasm</location>
    </subcellularLocation>
</comment>
<comment type="similarity">
    <text evidence="2">Belongs to the ATP phosphoribosyltransferase family. Long subfamily.</text>
</comment>
<dbReference type="EC" id="2.4.2.17"/>
<dbReference type="EMBL" id="L77117">
    <property type="protein sequence ID" value="AAB99208.1"/>
    <property type="molecule type" value="Genomic_DNA"/>
</dbReference>
<dbReference type="PIR" id="C64450">
    <property type="entry name" value="C64450"/>
</dbReference>
<dbReference type="RefSeq" id="WP_010870716.1">
    <property type="nucleotide sequence ID" value="NC_000909.1"/>
</dbReference>
<dbReference type="SMR" id="Q58601"/>
<dbReference type="FunCoup" id="Q58601">
    <property type="interactions" value="181"/>
</dbReference>
<dbReference type="STRING" id="243232.MJ_1204"/>
<dbReference type="PaxDb" id="243232-MJ_1204"/>
<dbReference type="EnsemblBacteria" id="AAB99208">
    <property type="protein sequence ID" value="AAB99208"/>
    <property type="gene ID" value="MJ_1204"/>
</dbReference>
<dbReference type="GeneID" id="1452099"/>
<dbReference type="KEGG" id="mja:MJ_1204"/>
<dbReference type="eggNOG" id="arCOG02208">
    <property type="taxonomic scope" value="Archaea"/>
</dbReference>
<dbReference type="HOGENOM" id="CLU_038115_1_1_2"/>
<dbReference type="InParanoid" id="Q58601"/>
<dbReference type="OrthoDB" id="33116at2157"/>
<dbReference type="PhylomeDB" id="Q58601"/>
<dbReference type="UniPathway" id="UPA00031">
    <property type="reaction ID" value="UER00006"/>
</dbReference>
<dbReference type="Proteomes" id="UP000000805">
    <property type="component" value="Chromosome"/>
</dbReference>
<dbReference type="GO" id="GO:0005737">
    <property type="term" value="C:cytoplasm"/>
    <property type="evidence" value="ECO:0007669"/>
    <property type="project" value="UniProtKB-SubCell"/>
</dbReference>
<dbReference type="GO" id="GO:0005524">
    <property type="term" value="F:ATP binding"/>
    <property type="evidence" value="ECO:0007669"/>
    <property type="project" value="UniProtKB-KW"/>
</dbReference>
<dbReference type="GO" id="GO:0003879">
    <property type="term" value="F:ATP phosphoribosyltransferase activity"/>
    <property type="evidence" value="ECO:0000318"/>
    <property type="project" value="GO_Central"/>
</dbReference>
<dbReference type="GO" id="GO:0000287">
    <property type="term" value="F:magnesium ion binding"/>
    <property type="evidence" value="ECO:0007669"/>
    <property type="project" value="UniProtKB-UniRule"/>
</dbReference>
<dbReference type="GO" id="GO:0000105">
    <property type="term" value="P:L-histidine biosynthetic process"/>
    <property type="evidence" value="ECO:0000318"/>
    <property type="project" value="GO_Central"/>
</dbReference>
<dbReference type="CDD" id="cd13594">
    <property type="entry name" value="PBP2_HisGL4"/>
    <property type="match status" value="1"/>
</dbReference>
<dbReference type="FunFam" id="3.30.70.120:FF:000002">
    <property type="entry name" value="ATP phosphoribosyltransferase"/>
    <property type="match status" value="1"/>
</dbReference>
<dbReference type="Gene3D" id="3.30.70.120">
    <property type="match status" value="1"/>
</dbReference>
<dbReference type="Gene3D" id="3.40.190.10">
    <property type="entry name" value="Periplasmic binding protein-like II"/>
    <property type="match status" value="2"/>
</dbReference>
<dbReference type="HAMAP" id="MF_00079">
    <property type="entry name" value="HisG_Long"/>
    <property type="match status" value="1"/>
</dbReference>
<dbReference type="InterPro" id="IPR020621">
    <property type="entry name" value="ATP-PRT_HisG_long"/>
</dbReference>
<dbReference type="InterPro" id="IPR013820">
    <property type="entry name" value="ATP_PRibTrfase_cat"/>
</dbReference>
<dbReference type="InterPro" id="IPR018198">
    <property type="entry name" value="ATP_PRibTrfase_CS"/>
</dbReference>
<dbReference type="InterPro" id="IPR001348">
    <property type="entry name" value="ATP_PRibTrfase_HisG"/>
</dbReference>
<dbReference type="InterPro" id="IPR013115">
    <property type="entry name" value="HisG_C"/>
</dbReference>
<dbReference type="InterPro" id="IPR011322">
    <property type="entry name" value="N-reg_PII-like_a/b"/>
</dbReference>
<dbReference type="InterPro" id="IPR015867">
    <property type="entry name" value="N-reg_PII/ATP_PRibTrfase_C"/>
</dbReference>
<dbReference type="NCBIfam" id="TIGR00070">
    <property type="entry name" value="hisG"/>
    <property type="match status" value="1"/>
</dbReference>
<dbReference type="NCBIfam" id="TIGR03455">
    <property type="entry name" value="HisG_C-term"/>
    <property type="match status" value="1"/>
</dbReference>
<dbReference type="PANTHER" id="PTHR21403:SF10">
    <property type="entry name" value="ATP PHOSPHORIBOSYLTRANSFERASE"/>
    <property type="match status" value="1"/>
</dbReference>
<dbReference type="PANTHER" id="PTHR21403">
    <property type="entry name" value="ATP PHOSPHORIBOSYLTRANSFERASE ATP-PRTASE"/>
    <property type="match status" value="1"/>
</dbReference>
<dbReference type="Pfam" id="PF01634">
    <property type="entry name" value="HisG"/>
    <property type="match status" value="1"/>
</dbReference>
<dbReference type="Pfam" id="PF08029">
    <property type="entry name" value="HisG_C"/>
    <property type="match status" value="1"/>
</dbReference>
<dbReference type="SUPFAM" id="SSF54913">
    <property type="entry name" value="GlnB-like"/>
    <property type="match status" value="1"/>
</dbReference>
<dbReference type="SUPFAM" id="SSF53850">
    <property type="entry name" value="Periplasmic binding protein-like II"/>
    <property type="match status" value="1"/>
</dbReference>
<dbReference type="PROSITE" id="PS01316">
    <property type="entry name" value="ATP_P_PHORIBOSYLTR"/>
    <property type="match status" value="1"/>
</dbReference>
<accession>Q58601</accession>
<feature type="chain" id="PRO_0000151882" description="ATP phosphoribosyltransferase">
    <location>
        <begin position="1"/>
        <end position="288"/>
    </location>
</feature>
<organism>
    <name type="scientific">Methanocaldococcus jannaschii (strain ATCC 43067 / DSM 2661 / JAL-1 / JCM 10045 / NBRC 100440)</name>
    <name type="common">Methanococcus jannaschii</name>
    <dbReference type="NCBI Taxonomy" id="243232"/>
    <lineage>
        <taxon>Archaea</taxon>
        <taxon>Methanobacteriati</taxon>
        <taxon>Methanobacteriota</taxon>
        <taxon>Methanomada group</taxon>
        <taxon>Methanococci</taxon>
        <taxon>Methanococcales</taxon>
        <taxon>Methanocaldococcaceae</taxon>
        <taxon>Methanocaldococcus</taxon>
    </lineage>
</organism>